<organism>
    <name type="scientific">Corynebacterium glutamicum (strain R)</name>
    <dbReference type="NCBI Taxonomy" id="340322"/>
    <lineage>
        <taxon>Bacteria</taxon>
        <taxon>Bacillati</taxon>
        <taxon>Actinomycetota</taxon>
        <taxon>Actinomycetes</taxon>
        <taxon>Mycobacteriales</taxon>
        <taxon>Corynebacteriaceae</taxon>
        <taxon>Corynebacterium</taxon>
    </lineage>
</organism>
<feature type="chain" id="PRO_1000018695" description="Phosphoribosylaminoimidazole-succinocarboxamide synthase">
    <location>
        <begin position="1"/>
        <end position="297"/>
    </location>
</feature>
<evidence type="ECO:0000255" key="1">
    <source>
        <dbReference type="HAMAP-Rule" id="MF_00137"/>
    </source>
</evidence>
<accession>A4QGZ4</accession>
<proteinExistence type="inferred from homology"/>
<reference key="1">
    <citation type="journal article" date="2007" name="Microbiology">
        <title>Comparative analysis of the Corynebacterium glutamicum group and complete genome sequence of strain R.</title>
        <authorList>
            <person name="Yukawa H."/>
            <person name="Omumasaba C.A."/>
            <person name="Nonaka H."/>
            <person name="Kos P."/>
            <person name="Okai N."/>
            <person name="Suzuki N."/>
            <person name="Suda M."/>
            <person name="Tsuge Y."/>
            <person name="Watanabe J."/>
            <person name="Ikeda Y."/>
            <person name="Vertes A.A."/>
            <person name="Inui M."/>
        </authorList>
    </citation>
    <scope>NUCLEOTIDE SEQUENCE [LARGE SCALE GENOMIC DNA]</scope>
    <source>
        <strain>R</strain>
    </source>
</reference>
<comment type="catalytic activity">
    <reaction evidence="1">
        <text>5-amino-1-(5-phospho-D-ribosyl)imidazole-4-carboxylate + L-aspartate + ATP = (2S)-2-[5-amino-1-(5-phospho-beta-D-ribosyl)imidazole-4-carboxamido]succinate + ADP + phosphate + 2 H(+)</text>
        <dbReference type="Rhea" id="RHEA:22628"/>
        <dbReference type="ChEBI" id="CHEBI:15378"/>
        <dbReference type="ChEBI" id="CHEBI:29991"/>
        <dbReference type="ChEBI" id="CHEBI:30616"/>
        <dbReference type="ChEBI" id="CHEBI:43474"/>
        <dbReference type="ChEBI" id="CHEBI:58443"/>
        <dbReference type="ChEBI" id="CHEBI:77657"/>
        <dbReference type="ChEBI" id="CHEBI:456216"/>
        <dbReference type="EC" id="6.3.2.6"/>
    </reaction>
</comment>
<comment type="pathway">
    <text evidence="1">Purine metabolism; IMP biosynthesis via de novo pathway; 5-amino-1-(5-phospho-D-ribosyl)imidazole-4-carboxamide from 5-amino-1-(5-phospho-D-ribosyl)imidazole-4-carboxylate: step 1/2.</text>
</comment>
<comment type="similarity">
    <text evidence="1">Belongs to the SAICAR synthetase family.</text>
</comment>
<dbReference type="EC" id="6.3.2.6" evidence="1"/>
<dbReference type="EMBL" id="AP009044">
    <property type="protein sequence ID" value="BAF55510.1"/>
    <property type="molecule type" value="Genomic_DNA"/>
</dbReference>
<dbReference type="RefSeq" id="WP_011897842.1">
    <property type="nucleotide sequence ID" value="NC_009342.1"/>
</dbReference>
<dbReference type="SMR" id="A4QGZ4"/>
<dbReference type="KEGG" id="cgt:cgR_2499"/>
<dbReference type="HOGENOM" id="CLU_045637_0_0_11"/>
<dbReference type="PhylomeDB" id="A4QGZ4"/>
<dbReference type="UniPathway" id="UPA00074">
    <property type="reaction ID" value="UER00131"/>
</dbReference>
<dbReference type="Proteomes" id="UP000006698">
    <property type="component" value="Chromosome"/>
</dbReference>
<dbReference type="GO" id="GO:0005737">
    <property type="term" value="C:cytoplasm"/>
    <property type="evidence" value="ECO:0007669"/>
    <property type="project" value="TreeGrafter"/>
</dbReference>
<dbReference type="GO" id="GO:0005524">
    <property type="term" value="F:ATP binding"/>
    <property type="evidence" value="ECO:0007669"/>
    <property type="project" value="UniProtKB-KW"/>
</dbReference>
<dbReference type="GO" id="GO:0004639">
    <property type="term" value="F:phosphoribosylaminoimidazolesuccinocarboxamide synthase activity"/>
    <property type="evidence" value="ECO:0007669"/>
    <property type="project" value="UniProtKB-UniRule"/>
</dbReference>
<dbReference type="GO" id="GO:0006189">
    <property type="term" value="P:'de novo' IMP biosynthetic process"/>
    <property type="evidence" value="ECO:0007669"/>
    <property type="project" value="UniProtKB-UniRule"/>
</dbReference>
<dbReference type="CDD" id="cd01414">
    <property type="entry name" value="SAICAR_synt_Sc"/>
    <property type="match status" value="1"/>
</dbReference>
<dbReference type="FunFam" id="3.30.200.20:FF:000199">
    <property type="entry name" value="Phosphoribosylaminoimidazole-succinocarboxamide synthase"/>
    <property type="match status" value="1"/>
</dbReference>
<dbReference type="FunFam" id="3.30.470.20:FF:000015">
    <property type="entry name" value="Phosphoribosylaminoimidazole-succinocarboxamide synthase"/>
    <property type="match status" value="1"/>
</dbReference>
<dbReference type="Gene3D" id="3.30.470.20">
    <property type="entry name" value="ATP-grasp fold, B domain"/>
    <property type="match status" value="1"/>
</dbReference>
<dbReference type="Gene3D" id="3.30.200.20">
    <property type="entry name" value="Phosphorylase Kinase, domain 1"/>
    <property type="match status" value="1"/>
</dbReference>
<dbReference type="HAMAP" id="MF_00137">
    <property type="entry name" value="SAICAR_synth"/>
    <property type="match status" value="1"/>
</dbReference>
<dbReference type="InterPro" id="IPR028923">
    <property type="entry name" value="SAICAR_synt/ADE2_N"/>
</dbReference>
<dbReference type="InterPro" id="IPR001636">
    <property type="entry name" value="SAICAR_synth"/>
</dbReference>
<dbReference type="InterPro" id="IPR018236">
    <property type="entry name" value="SAICAR_synthetase_CS"/>
</dbReference>
<dbReference type="NCBIfam" id="NF010568">
    <property type="entry name" value="PRK13961.1"/>
    <property type="match status" value="1"/>
</dbReference>
<dbReference type="NCBIfam" id="TIGR00081">
    <property type="entry name" value="purC"/>
    <property type="match status" value="1"/>
</dbReference>
<dbReference type="PANTHER" id="PTHR43700">
    <property type="entry name" value="PHOSPHORIBOSYLAMINOIMIDAZOLE-SUCCINOCARBOXAMIDE SYNTHASE"/>
    <property type="match status" value="1"/>
</dbReference>
<dbReference type="PANTHER" id="PTHR43700:SF1">
    <property type="entry name" value="PHOSPHORIBOSYLAMINOIMIDAZOLE-SUCCINOCARBOXAMIDE SYNTHASE"/>
    <property type="match status" value="1"/>
</dbReference>
<dbReference type="Pfam" id="PF01259">
    <property type="entry name" value="SAICAR_synt"/>
    <property type="match status" value="1"/>
</dbReference>
<dbReference type="SUPFAM" id="SSF56104">
    <property type="entry name" value="SAICAR synthase-like"/>
    <property type="match status" value="1"/>
</dbReference>
<dbReference type="PROSITE" id="PS01057">
    <property type="entry name" value="SAICAR_SYNTHETASE_1"/>
    <property type="match status" value="1"/>
</dbReference>
<dbReference type="PROSITE" id="PS01058">
    <property type="entry name" value="SAICAR_SYNTHETASE_2"/>
    <property type="match status" value="1"/>
</dbReference>
<gene>
    <name evidence="1" type="primary">purC</name>
    <name type="ordered locus">cgR_2499</name>
</gene>
<name>PUR7_CORGB</name>
<sequence length="297" mass="33004">MRPELSQYKHLSAGKVREIYEIDDKHILMVASDRISAYDFILDTEIPDKGRVLTAMSQFFFDTIDFPNHLAGPADDPRIPEEVLGRAMVCKKLNMLPFECVVRGYLTGSGLVEYKQTSSVCGVELPEGLVESSQLPEPIFTPATKADIGDHDINVSFDVVEERLGEARANQLRDASIAIYKAAAEIARERGVILADTKFEFGIDEDGTLVLGDEVLTPDSSRYWPLEGYEAGSVQPSFDKQFVRNWLTGPKSGWDKDSGLEPPALPGSVVEATRERYIEAYELISGQKFCQWIGSCV</sequence>
<keyword id="KW-0067">ATP-binding</keyword>
<keyword id="KW-0436">Ligase</keyword>
<keyword id="KW-0547">Nucleotide-binding</keyword>
<keyword id="KW-0658">Purine biosynthesis</keyword>
<protein>
    <recommendedName>
        <fullName evidence="1">Phosphoribosylaminoimidazole-succinocarboxamide synthase</fullName>
        <ecNumber evidence="1">6.3.2.6</ecNumber>
    </recommendedName>
    <alternativeName>
        <fullName evidence="1">SAICAR synthetase</fullName>
    </alternativeName>
</protein>